<proteinExistence type="inferred from homology"/>
<sequence>MKLSKGVLSSILLTLLIKPIESSIVNTDGELICAPNNPTDCYPKIFEPTTEWQTIREGQDIPAGLHVRLNMENLAREAKILDPSEETEGSSELMVNAEQNNDNGDNSHQMTNEDQANEIQQKIKEFKQTQGKSKVSTVDLNDFQSSVDEVQHYREGGDANRLSTALDTLIDLSHDIEFGVKLTQDSSVFRSLVDVSKSVQDEDLQEKVYRIMGSSLRNNPDAVNHVLKNQDATFVECLFDKLDTDASDVIKKRILGIIHALTQNSHFNAKYFNSNNANSAVDSLISVFPSLESQSQTRLMNILEDLKLLGGANSNEKRAIEESADPKSQYSHFLQHSLADSGVASEDQFKLYFNKLSEVHSQDKSLKPSKAFMEWLSKEAELRSKGNKERDSSYTEEDRQFDQDLLRARHVVFGNPMGLRKALADEL</sequence>
<name>SIL1_DEBHA</name>
<evidence type="ECO:0000250" key="1"/>
<evidence type="ECO:0000255" key="2"/>
<evidence type="ECO:0000255" key="3">
    <source>
        <dbReference type="PROSITE-ProRule" id="PRU10138"/>
    </source>
</evidence>
<evidence type="ECO:0000305" key="4"/>
<gene>
    <name type="primary">SIL1</name>
    <name type="ordered locus">DEHA2C15664g</name>
</gene>
<accession>Q6BTV5</accession>
<accession>B5RTC4</accession>
<dbReference type="EMBL" id="CR382135">
    <property type="protein sequence ID" value="CAR65586.1"/>
    <property type="molecule type" value="Genomic_DNA"/>
</dbReference>
<dbReference type="RefSeq" id="XP_002770223.1">
    <property type="nucleotide sequence ID" value="XM_002770177.1"/>
</dbReference>
<dbReference type="SMR" id="Q6BTV5"/>
<dbReference type="FunCoup" id="Q6BTV5">
    <property type="interactions" value="179"/>
</dbReference>
<dbReference type="STRING" id="284592.Q6BTV5"/>
<dbReference type="GeneID" id="8998396"/>
<dbReference type="KEGG" id="dha:DEHA2C15664g"/>
<dbReference type="VEuPathDB" id="FungiDB:DEHA2C15664g"/>
<dbReference type="eggNOG" id="KOG2160">
    <property type="taxonomic scope" value="Eukaryota"/>
</dbReference>
<dbReference type="HOGENOM" id="CLU_034955_0_0_1"/>
<dbReference type="InParanoid" id="Q6BTV5"/>
<dbReference type="OMA" id="GLDIRMN"/>
<dbReference type="OrthoDB" id="448649at2759"/>
<dbReference type="Proteomes" id="UP000000599">
    <property type="component" value="Chromosome C"/>
</dbReference>
<dbReference type="GO" id="GO:0005788">
    <property type="term" value="C:endoplasmic reticulum lumen"/>
    <property type="evidence" value="ECO:0007669"/>
    <property type="project" value="UniProtKB-SubCell"/>
</dbReference>
<dbReference type="GO" id="GO:0000774">
    <property type="term" value="F:adenyl-nucleotide exchange factor activity"/>
    <property type="evidence" value="ECO:0007669"/>
    <property type="project" value="InterPro"/>
</dbReference>
<dbReference type="GO" id="GO:0015031">
    <property type="term" value="P:protein transport"/>
    <property type="evidence" value="ECO:0007669"/>
    <property type="project" value="UniProtKB-KW"/>
</dbReference>
<dbReference type="Gene3D" id="1.25.10.10">
    <property type="entry name" value="Leucine-rich Repeat Variant"/>
    <property type="match status" value="1"/>
</dbReference>
<dbReference type="InterPro" id="IPR011989">
    <property type="entry name" value="ARM-like"/>
</dbReference>
<dbReference type="InterPro" id="IPR016024">
    <property type="entry name" value="ARM-type_fold"/>
</dbReference>
<dbReference type="InterPro" id="IPR031884">
    <property type="entry name" value="Sil1_fungi"/>
</dbReference>
<dbReference type="Pfam" id="PF16782">
    <property type="entry name" value="SIL1"/>
    <property type="match status" value="1"/>
</dbReference>
<dbReference type="SUPFAM" id="SSF48371">
    <property type="entry name" value="ARM repeat"/>
    <property type="match status" value="1"/>
</dbReference>
<dbReference type="PROSITE" id="PS00014">
    <property type="entry name" value="ER_TARGET"/>
    <property type="match status" value="1"/>
</dbReference>
<comment type="function">
    <text evidence="1">Required for protein translocation and folding in the endoplasmic reticulum (ER). Functions as a nucleotide exchange factor for the ER lumenal chaperone KAR2 (By similarity).</text>
</comment>
<comment type="subunit">
    <text evidence="1">Interacts with KAR2.</text>
</comment>
<comment type="subcellular location">
    <subcellularLocation>
        <location evidence="3">Endoplasmic reticulum lumen</location>
    </subcellularLocation>
</comment>
<comment type="similarity">
    <text evidence="4">Belongs to the SIL1 family.</text>
</comment>
<organism>
    <name type="scientific">Debaryomyces hansenii (strain ATCC 36239 / CBS 767 / BCRC 21394 / JCM 1990 / NBRC 0083 / IGC 2968)</name>
    <name type="common">Yeast</name>
    <name type="synonym">Torulaspora hansenii</name>
    <dbReference type="NCBI Taxonomy" id="284592"/>
    <lineage>
        <taxon>Eukaryota</taxon>
        <taxon>Fungi</taxon>
        <taxon>Dikarya</taxon>
        <taxon>Ascomycota</taxon>
        <taxon>Saccharomycotina</taxon>
        <taxon>Pichiomycetes</taxon>
        <taxon>Debaryomycetaceae</taxon>
        <taxon>Debaryomyces</taxon>
    </lineage>
</organism>
<keyword id="KW-0256">Endoplasmic reticulum</keyword>
<keyword id="KW-0653">Protein transport</keyword>
<keyword id="KW-1185">Reference proteome</keyword>
<keyword id="KW-0732">Signal</keyword>
<keyword id="KW-0811">Translocation</keyword>
<keyword id="KW-0813">Transport</keyword>
<protein>
    <recommendedName>
        <fullName>Nucleotide exchange factor SIL1</fullName>
    </recommendedName>
</protein>
<feature type="signal peptide" evidence="2">
    <location>
        <begin position="1"/>
        <end position="22"/>
    </location>
</feature>
<feature type="chain" id="PRO_0000223362" description="Nucleotide exchange factor SIL1">
    <location>
        <begin position="23"/>
        <end position="427"/>
    </location>
</feature>
<feature type="short sequence motif" description="Prevents secretion from ER" evidence="3">
    <location>
        <begin position="424"/>
        <end position="427"/>
    </location>
</feature>
<reference key="1">
    <citation type="journal article" date="2004" name="Nature">
        <title>Genome evolution in yeasts.</title>
        <authorList>
            <person name="Dujon B."/>
            <person name="Sherman D."/>
            <person name="Fischer G."/>
            <person name="Durrens P."/>
            <person name="Casaregola S."/>
            <person name="Lafontaine I."/>
            <person name="de Montigny J."/>
            <person name="Marck C."/>
            <person name="Neuveglise C."/>
            <person name="Talla E."/>
            <person name="Goffard N."/>
            <person name="Frangeul L."/>
            <person name="Aigle M."/>
            <person name="Anthouard V."/>
            <person name="Babour A."/>
            <person name="Barbe V."/>
            <person name="Barnay S."/>
            <person name="Blanchin S."/>
            <person name="Beckerich J.-M."/>
            <person name="Beyne E."/>
            <person name="Bleykasten C."/>
            <person name="Boisrame A."/>
            <person name="Boyer J."/>
            <person name="Cattolico L."/>
            <person name="Confanioleri F."/>
            <person name="de Daruvar A."/>
            <person name="Despons L."/>
            <person name="Fabre E."/>
            <person name="Fairhead C."/>
            <person name="Ferry-Dumazet H."/>
            <person name="Groppi A."/>
            <person name="Hantraye F."/>
            <person name="Hennequin C."/>
            <person name="Jauniaux N."/>
            <person name="Joyet P."/>
            <person name="Kachouri R."/>
            <person name="Kerrest A."/>
            <person name="Koszul R."/>
            <person name="Lemaire M."/>
            <person name="Lesur I."/>
            <person name="Ma L."/>
            <person name="Muller H."/>
            <person name="Nicaud J.-M."/>
            <person name="Nikolski M."/>
            <person name="Oztas S."/>
            <person name="Ozier-Kalogeropoulos O."/>
            <person name="Pellenz S."/>
            <person name="Potier S."/>
            <person name="Richard G.-F."/>
            <person name="Straub M.-L."/>
            <person name="Suleau A."/>
            <person name="Swennen D."/>
            <person name="Tekaia F."/>
            <person name="Wesolowski-Louvel M."/>
            <person name="Westhof E."/>
            <person name="Wirth B."/>
            <person name="Zeniou-Meyer M."/>
            <person name="Zivanovic Y."/>
            <person name="Bolotin-Fukuhara M."/>
            <person name="Thierry A."/>
            <person name="Bouchier C."/>
            <person name="Caudron B."/>
            <person name="Scarpelli C."/>
            <person name="Gaillardin C."/>
            <person name="Weissenbach J."/>
            <person name="Wincker P."/>
            <person name="Souciet J.-L."/>
        </authorList>
    </citation>
    <scope>NUCLEOTIDE SEQUENCE [LARGE SCALE GENOMIC DNA]</scope>
    <source>
        <strain>ATCC 36239 / CBS 767 / BCRC 21394 / JCM 1990 / NBRC 0083 / IGC 2968</strain>
    </source>
</reference>